<keyword id="KW-0002">3D-structure</keyword>
<keyword id="KW-0025">Alternative splicing</keyword>
<keyword id="KW-1015">Disulfide bond</keyword>
<keyword id="KW-0325">Glycoprotein</keyword>
<keyword id="KW-0328">Glycosyltransferase</keyword>
<keyword id="KW-0333">Golgi apparatus</keyword>
<keyword id="KW-0472">Membrane</keyword>
<keyword id="KW-1267">Proteomics identification</keyword>
<keyword id="KW-1185">Reference proteome</keyword>
<keyword id="KW-0964">Secreted</keyword>
<keyword id="KW-0735">Signal-anchor</keyword>
<keyword id="KW-0808">Transferase</keyword>
<keyword id="KW-0812">Transmembrane</keyword>
<keyword id="KW-1133">Transmembrane helix</keyword>
<name>SIA8D_HUMAN</name>
<feature type="chain" id="PRO_0000149293" description="CMP-N-acetylneuraminate-poly-alpha-2,8-sialyltransferase">
    <location>
        <begin position="1"/>
        <end position="359"/>
    </location>
</feature>
<feature type="topological domain" description="Cytoplasmic" evidence="2">
    <location>
        <begin position="1"/>
        <end position="7"/>
    </location>
</feature>
<feature type="transmembrane region" description="Helical; Signal-anchor for type II membrane protein" evidence="2">
    <location>
        <begin position="8"/>
        <end position="20"/>
    </location>
</feature>
<feature type="topological domain" description="Lumenal" evidence="2">
    <location>
        <begin position="21"/>
        <end position="359"/>
    </location>
</feature>
<feature type="active site" description="Proton donor/acceptor" evidence="1">
    <location>
        <position position="331"/>
    </location>
</feature>
<feature type="binding site" evidence="1">
    <location>
        <position position="147"/>
    </location>
    <ligand>
        <name>CMP-N-acetyl-beta-neuraminate</name>
        <dbReference type="ChEBI" id="CHEBI:57812"/>
    </ligand>
</feature>
<feature type="binding site" evidence="1">
    <location>
        <position position="170"/>
    </location>
    <ligand>
        <name>CMP-N-acetyl-beta-neuraminate</name>
        <dbReference type="ChEBI" id="CHEBI:57812"/>
    </ligand>
</feature>
<feature type="binding site" evidence="1">
    <location>
        <position position="279"/>
    </location>
    <ligand>
        <name>CMP-N-acetyl-beta-neuraminate</name>
        <dbReference type="ChEBI" id="CHEBI:57812"/>
    </ligand>
</feature>
<feature type="binding site" evidence="1">
    <location>
        <position position="280"/>
    </location>
    <ligand>
        <name>CMP-N-acetyl-beta-neuraminate</name>
        <dbReference type="ChEBI" id="CHEBI:57812"/>
    </ligand>
</feature>
<feature type="binding site" evidence="1">
    <location>
        <position position="281"/>
    </location>
    <ligand>
        <name>CMP-N-acetyl-beta-neuraminate</name>
        <dbReference type="ChEBI" id="CHEBI:57812"/>
    </ligand>
</feature>
<feature type="binding site" evidence="1">
    <location>
        <position position="301"/>
    </location>
    <ligand>
        <name>CMP-N-acetyl-beta-neuraminate</name>
        <dbReference type="ChEBI" id="CHEBI:57812"/>
    </ligand>
</feature>
<feature type="glycosylation site" description="N-linked (GlcNAc...) asparagine" evidence="2">
    <location>
        <position position="50"/>
    </location>
</feature>
<feature type="glycosylation site" description="N-linked (GlcNAc...) asparagine" evidence="4">
    <location>
        <position position="74"/>
    </location>
</feature>
<feature type="glycosylation site" description="N-linked (GlcNAc...) asparagine" evidence="2">
    <location>
        <position position="119"/>
    </location>
</feature>
<feature type="glycosylation site" description="N-linked (GlcNAc...) asparagine" evidence="2">
    <location>
        <position position="204"/>
    </location>
</feature>
<feature type="glycosylation site" description="N-linked (GlcNAc...) asparagine" evidence="2">
    <location>
        <position position="219"/>
    </location>
</feature>
<feature type="disulfide bond" evidence="4">
    <location>
        <begin position="142"/>
        <end position="292"/>
    </location>
</feature>
<feature type="disulfide bond" evidence="4">
    <location>
        <begin position="156"/>
        <end position="356"/>
    </location>
</feature>
<feature type="splice variant" id="VSP_044867" description="In isoform 2." evidence="11">
    <location>
        <begin position="169"/>
        <end position="359"/>
    </location>
</feature>
<feature type="sequence variant" id="VAR_068976" description="In dbSNP:rs199768560." evidence="5">
    <original>R</original>
    <variation>K</variation>
    <location>
        <position position="7"/>
    </location>
</feature>
<feature type="sequence variant" id="VAR_036169" description="In a colorectal cancer sample; somatic mutation." evidence="6">
    <original>E</original>
    <variation>G</variation>
    <location>
        <position position="92"/>
    </location>
</feature>
<feature type="mutagenesis site" description="Loss of NCAM1 polysialylation activity. Loss of autopolysialylation. Loss of NCAM1 polysialylation activity; when associated with A-292. Loss of autopolysialylation; when associated with A-292." evidence="4">
    <original>C</original>
    <variation>A</variation>
    <location>
        <position position="142"/>
    </location>
</feature>
<feature type="mutagenesis site" description="Loss of NCAM1 polysialylation activity. Loss of autopolysialylation. Loss of NCAM1 polysialylation activity; when associated with A-356. Loss of autopolysialylation; when associated with A-356." evidence="4">
    <original>C</original>
    <variation>A</variation>
    <location>
        <position position="156"/>
    </location>
</feature>
<feature type="mutagenesis site" description="Reduces NCAM1 polysialylation activity. Loss of autopolysialylation." evidence="4">
    <original>C</original>
    <variation>A</variation>
    <location>
        <position position="169"/>
    </location>
</feature>
<feature type="mutagenesis site" description="Loss of NCAM1 polysialylation activity. Loss of autopolysialylation. Loss of NCAM1 polysialylation activity; when associated with A-142. Loss of autopolysialylation; when associated with A-142." evidence="4">
    <original>C</original>
    <variation>A</variation>
    <location>
        <position position="292"/>
    </location>
</feature>
<feature type="mutagenesis site" description="Loss of NCAM1 polysialylation activity. Loss of autopolysialylation. Loss of NCAM1 polysialylation activity; when associated with A-156. Loss of autopolysialylation; when associated with A-156." evidence="4">
    <original>C</original>
    <variation>A</variation>
    <location>
        <position position="356"/>
    </location>
</feature>
<feature type="helix" evidence="19">
    <location>
        <begin position="247"/>
        <end position="253"/>
    </location>
</feature>
<feature type="helix" evidence="18">
    <location>
        <begin position="260"/>
        <end position="269"/>
    </location>
</feature>
<feature type="strand" evidence="19">
    <location>
        <begin position="272"/>
        <end position="274"/>
    </location>
</feature>
<protein>
    <recommendedName>
        <fullName>CMP-N-acetylneuraminate-poly-alpha-2,8-sialyltransferase</fullName>
        <ecNumber evidence="3 4 7 9">2.4.3.-</ecNumber>
    </recommendedName>
    <alternativeName>
        <fullName>Alpha-2,8-sialyltransferase 8D</fullName>
    </alternativeName>
    <alternativeName>
        <fullName evidence="12">Polysialyltransferase</fullName>
    </alternativeName>
    <alternativeName>
        <fullName>Polysialyltransferase-1</fullName>
    </alternativeName>
    <alternativeName>
        <fullName>Sialyltransferase 8D</fullName>
        <shortName>SIAT8-D</shortName>
    </alternativeName>
    <alternativeName>
        <fullName>Sialyltransferase St8Sia IV</fullName>
        <shortName>ST8SiaIV</shortName>
    </alternativeName>
</protein>
<organism>
    <name type="scientific">Homo sapiens</name>
    <name type="common">Human</name>
    <dbReference type="NCBI Taxonomy" id="9606"/>
    <lineage>
        <taxon>Eukaryota</taxon>
        <taxon>Metazoa</taxon>
        <taxon>Chordata</taxon>
        <taxon>Craniata</taxon>
        <taxon>Vertebrata</taxon>
        <taxon>Euteleostomi</taxon>
        <taxon>Mammalia</taxon>
        <taxon>Eutheria</taxon>
        <taxon>Euarchontoglires</taxon>
        <taxon>Primates</taxon>
        <taxon>Haplorrhini</taxon>
        <taxon>Catarrhini</taxon>
        <taxon>Hominidae</taxon>
        <taxon>Homo</taxon>
    </lineage>
</organism>
<evidence type="ECO:0000250" key="1">
    <source>
        <dbReference type="UniProtKB" id="O43173"/>
    </source>
</evidence>
<evidence type="ECO:0000255" key="2"/>
<evidence type="ECO:0000269" key="3">
    <source>
    </source>
</evidence>
<evidence type="ECO:0000269" key="4">
    <source>
    </source>
</evidence>
<evidence type="ECO:0000269" key="5">
    <source>
    </source>
</evidence>
<evidence type="ECO:0000269" key="6">
    <source>
    </source>
</evidence>
<evidence type="ECO:0000269" key="7">
    <source>
    </source>
</evidence>
<evidence type="ECO:0000269" key="8">
    <source>
    </source>
</evidence>
<evidence type="ECO:0000269" key="9">
    <source>
    </source>
</evidence>
<evidence type="ECO:0000269" key="10">
    <source>
    </source>
</evidence>
<evidence type="ECO:0000303" key="11">
    <source>
    </source>
</evidence>
<evidence type="ECO:0000303" key="12">
    <source>
    </source>
</evidence>
<evidence type="ECO:0000305" key="13"/>
<evidence type="ECO:0000312" key="14">
    <source>
        <dbReference type="HGNC" id="HGNC:10871"/>
    </source>
</evidence>
<evidence type="ECO:0007744" key="15">
    <source>
        <dbReference type="PDB" id="5Y22"/>
    </source>
</evidence>
<evidence type="ECO:0007744" key="16">
    <source>
        <dbReference type="PDB" id="5Y3U"/>
    </source>
</evidence>
<evidence type="ECO:0007744" key="17">
    <source>
        <dbReference type="PDB" id="6AHZ"/>
    </source>
</evidence>
<evidence type="ECO:0007829" key="18">
    <source>
        <dbReference type="PDB" id="5Y22"/>
    </source>
</evidence>
<evidence type="ECO:0007829" key="19">
    <source>
        <dbReference type="PDB" id="6AHZ"/>
    </source>
</evidence>
<proteinExistence type="evidence at protein level"/>
<sequence>MRSIRKRWTICTISLLLIFYKTKEIARTEEHQETQLIGDGELSLSRSLVNSSDKIIRKAGSSIFQHNVEGWKINSSLVLEIRKNILRFLDAERDVSVVKSSFKPGDVIHYVLDRRRTLNISHDLHSLLPEVSPMKNRRFKTCAVVGNSGILLDSECGKEIDSHNFVIRCNLAPVVEFAADVGTKSDFITMNPSVVQRAFGGFRNESDREKFVHRLSMLNDSVLWIPAFMVKGGEKHVEWVNALILKNKLKVRTAYPSLRLIHAVRGYWLTNKVPIKRPSTGLLMYTLATRFCDEIHLYGFWPFPKDLNGKAVKYHYYDDLKYRYFSNASPHRMPLEFKTLNVLHNRGALKLTTGKCVKQ</sequence>
<gene>
    <name evidence="14" type="primary">ST8SIA4</name>
    <name evidence="12" type="synonym">PST</name>
    <name type="synonym">PST1</name>
    <name type="synonym">SIAT8D</name>
</gene>
<accession>Q92187</accession>
<accession>A8KA07</accession>
<accession>G3V104</accession>
<accession>Q8N1F4</accession>
<accession>Q92693</accession>
<reference key="1">
    <citation type="journal article" date="1995" name="Proc. Natl. Acad. Sci. U.S.A.">
        <title>Expression cloning of a human polysialyltransferase that forms the polysialylated neural cell adhesion molecule present in embryonic brain.</title>
        <authorList>
            <person name="Nakayama J."/>
            <person name="Fukuda M.N."/>
            <person name="Fredette B."/>
            <person name="Ranscht B."/>
            <person name="Fukuda M."/>
        </authorList>
    </citation>
    <scope>NUCLEOTIDE SEQUENCE [MRNA] (ISOFORM 1)</scope>
    <scope>FUNCTION</scope>
    <scope>TISSUE SPECIFICITY</scope>
    <source>
        <tissue>Fetal brain</tissue>
    </source>
</reference>
<reference key="2">
    <citation type="journal article" date="2004" name="Nat. Genet.">
        <title>Complete sequencing and characterization of 21,243 full-length human cDNAs.</title>
        <authorList>
            <person name="Ota T."/>
            <person name="Suzuki Y."/>
            <person name="Nishikawa T."/>
            <person name="Otsuki T."/>
            <person name="Sugiyama T."/>
            <person name="Irie R."/>
            <person name="Wakamatsu A."/>
            <person name="Hayashi K."/>
            <person name="Sato H."/>
            <person name="Nagai K."/>
            <person name="Kimura K."/>
            <person name="Makita H."/>
            <person name="Sekine M."/>
            <person name="Obayashi M."/>
            <person name="Nishi T."/>
            <person name="Shibahara T."/>
            <person name="Tanaka T."/>
            <person name="Ishii S."/>
            <person name="Yamamoto J."/>
            <person name="Saito K."/>
            <person name="Kawai Y."/>
            <person name="Isono Y."/>
            <person name="Nakamura Y."/>
            <person name="Nagahari K."/>
            <person name="Murakami K."/>
            <person name="Yasuda T."/>
            <person name="Iwayanagi T."/>
            <person name="Wagatsuma M."/>
            <person name="Shiratori A."/>
            <person name="Sudo H."/>
            <person name="Hosoiri T."/>
            <person name="Kaku Y."/>
            <person name="Kodaira H."/>
            <person name="Kondo H."/>
            <person name="Sugawara M."/>
            <person name="Takahashi M."/>
            <person name="Kanda K."/>
            <person name="Yokoi T."/>
            <person name="Furuya T."/>
            <person name="Kikkawa E."/>
            <person name="Omura Y."/>
            <person name="Abe K."/>
            <person name="Kamihara K."/>
            <person name="Katsuta N."/>
            <person name="Sato K."/>
            <person name="Tanikawa M."/>
            <person name="Yamazaki M."/>
            <person name="Ninomiya K."/>
            <person name="Ishibashi T."/>
            <person name="Yamashita H."/>
            <person name="Murakawa K."/>
            <person name="Fujimori K."/>
            <person name="Tanai H."/>
            <person name="Kimata M."/>
            <person name="Watanabe M."/>
            <person name="Hiraoka S."/>
            <person name="Chiba Y."/>
            <person name="Ishida S."/>
            <person name="Ono Y."/>
            <person name="Takiguchi S."/>
            <person name="Watanabe S."/>
            <person name="Yosida M."/>
            <person name="Hotuta T."/>
            <person name="Kusano J."/>
            <person name="Kanehori K."/>
            <person name="Takahashi-Fujii A."/>
            <person name="Hara H."/>
            <person name="Tanase T.-O."/>
            <person name="Nomura Y."/>
            <person name="Togiya S."/>
            <person name="Komai F."/>
            <person name="Hara R."/>
            <person name="Takeuchi K."/>
            <person name="Arita M."/>
            <person name="Imose N."/>
            <person name="Musashino K."/>
            <person name="Yuuki H."/>
            <person name="Oshima A."/>
            <person name="Sasaki N."/>
            <person name="Aotsuka S."/>
            <person name="Yoshikawa Y."/>
            <person name="Matsunawa H."/>
            <person name="Ichihara T."/>
            <person name="Shiohata N."/>
            <person name="Sano S."/>
            <person name="Moriya S."/>
            <person name="Momiyama H."/>
            <person name="Satoh N."/>
            <person name="Takami S."/>
            <person name="Terashima Y."/>
            <person name="Suzuki O."/>
            <person name="Nakagawa S."/>
            <person name="Senoh A."/>
            <person name="Mizoguchi H."/>
            <person name="Goto Y."/>
            <person name="Shimizu F."/>
            <person name="Wakebe H."/>
            <person name="Hishigaki H."/>
            <person name="Watanabe T."/>
            <person name="Sugiyama A."/>
            <person name="Takemoto M."/>
            <person name="Kawakami B."/>
            <person name="Yamazaki M."/>
            <person name="Watanabe K."/>
            <person name="Kumagai A."/>
            <person name="Itakura S."/>
            <person name="Fukuzumi Y."/>
            <person name="Fujimori Y."/>
            <person name="Komiyama M."/>
            <person name="Tashiro H."/>
            <person name="Tanigami A."/>
            <person name="Fujiwara T."/>
            <person name="Ono T."/>
            <person name="Yamada K."/>
            <person name="Fujii Y."/>
            <person name="Ozaki K."/>
            <person name="Hirao M."/>
            <person name="Ohmori Y."/>
            <person name="Kawabata A."/>
            <person name="Hikiji T."/>
            <person name="Kobatake N."/>
            <person name="Inagaki H."/>
            <person name="Ikema Y."/>
            <person name="Okamoto S."/>
            <person name="Okitani R."/>
            <person name="Kawakami T."/>
            <person name="Noguchi S."/>
            <person name="Itoh T."/>
            <person name="Shigeta K."/>
            <person name="Senba T."/>
            <person name="Matsumura K."/>
            <person name="Nakajima Y."/>
            <person name="Mizuno T."/>
            <person name="Morinaga M."/>
            <person name="Sasaki M."/>
            <person name="Togashi T."/>
            <person name="Oyama M."/>
            <person name="Hata H."/>
            <person name="Watanabe M."/>
            <person name="Komatsu T."/>
            <person name="Mizushima-Sugano J."/>
            <person name="Satoh T."/>
            <person name="Shirai Y."/>
            <person name="Takahashi Y."/>
            <person name="Nakagawa K."/>
            <person name="Okumura K."/>
            <person name="Nagase T."/>
            <person name="Nomura N."/>
            <person name="Kikuchi H."/>
            <person name="Masuho Y."/>
            <person name="Yamashita R."/>
            <person name="Nakai K."/>
            <person name="Yada T."/>
            <person name="Nakamura Y."/>
            <person name="Ohara O."/>
            <person name="Isogai T."/>
            <person name="Sugano S."/>
        </authorList>
    </citation>
    <scope>NUCLEOTIDE SEQUENCE [LARGE SCALE MRNA] (ISOFORM 1)</scope>
    <source>
        <tissue>Trachea</tissue>
    </source>
</reference>
<reference key="3">
    <citation type="journal article" date="2004" name="Nature">
        <title>The DNA sequence and comparative analysis of human chromosome 5.</title>
        <authorList>
            <person name="Schmutz J."/>
            <person name="Martin J."/>
            <person name="Terry A."/>
            <person name="Couronne O."/>
            <person name="Grimwood J."/>
            <person name="Lowry S."/>
            <person name="Gordon L.A."/>
            <person name="Scott D."/>
            <person name="Xie G."/>
            <person name="Huang W."/>
            <person name="Hellsten U."/>
            <person name="Tran-Gyamfi M."/>
            <person name="She X."/>
            <person name="Prabhakar S."/>
            <person name="Aerts A."/>
            <person name="Altherr M."/>
            <person name="Bajorek E."/>
            <person name="Black S."/>
            <person name="Branscomb E."/>
            <person name="Caoile C."/>
            <person name="Challacombe J.F."/>
            <person name="Chan Y.M."/>
            <person name="Denys M."/>
            <person name="Detter J.C."/>
            <person name="Escobar J."/>
            <person name="Flowers D."/>
            <person name="Fotopulos D."/>
            <person name="Glavina T."/>
            <person name="Gomez M."/>
            <person name="Gonzales E."/>
            <person name="Goodstein D."/>
            <person name="Grigoriev I."/>
            <person name="Groza M."/>
            <person name="Hammon N."/>
            <person name="Hawkins T."/>
            <person name="Haydu L."/>
            <person name="Israni S."/>
            <person name="Jett J."/>
            <person name="Kadner K."/>
            <person name="Kimball H."/>
            <person name="Kobayashi A."/>
            <person name="Lopez F."/>
            <person name="Lou Y."/>
            <person name="Martinez D."/>
            <person name="Medina C."/>
            <person name="Morgan J."/>
            <person name="Nandkeshwar R."/>
            <person name="Noonan J.P."/>
            <person name="Pitluck S."/>
            <person name="Pollard M."/>
            <person name="Predki P."/>
            <person name="Priest J."/>
            <person name="Ramirez L."/>
            <person name="Retterer J."/>
            <person name="Rodriguez A."/>
            <person name="Rogers S."/>
            <person name="Salamov A."/>
            <person name="Salazar A."/>
            <person name="Thayer N."/>
            <person name="Tice H."/>
            <person name="Tsai M."/>
            <person name="Ustaszewska A."/>
            <person name="Vo N."/>
            <person name="Wheeler J."/>
            <person name="Wu K."/>
            <person name="Yang J."/>
            <person name="Dickson M."/>
            <person name="Cheng J.-F."/>
            <person name="Eichler E.E."/>
            <person name="Olsen A."/>
            <person name="Pennacchio L.A."/>
            <person name="Rokhsar D.S."/>
            <person name="Richardson P."/>
            <person name="Lucas S.M."/>
            <person name="Myers R.M."/>
            <person name="Rubin E.M."/>
        </authorList>
    </citation>
    <scope>NUCLEOTIDE SEQUENCE [LARGE SCALE GENOMIC DNA]</scope>
</reference>
<reference key="4">
    <citation type="submission" date="2005-09" db="EMBL/GenBank/DDBJ databases">
        <authorList>
            <person name="Mural R.J."/>
            <person name="Istrail S."/>
            <person name="Sutton G.G."/>
            <person name="Florea L."/>
            <person name="Halpern A.L."/>
            <person name="Mobarry C.M."/>
            <person name="Lippert R."/>
            <person name="Walenz B."/>
            <person name="Shatkay H."/>
            <person name="Dew I."/>
            <person name="Miller J.R."/>
            <person name="Flanigan M.J."/>
            <person name="Edwards N.J."/>
            <person name="Bolanos R."/>
            <person name="Fasulo D."/>
            <person name="Halldorsson B.V."/>
            <person name="Hannenhalli S."/>
            <person name="Turner R."/>
            <person name="Yooseph S."/>
            <person name="Lu F."/>
            <person name="Nusskern D.R."/>
            <person name="Shue B.C."/>
            <person name="Zheng X.H."/>
            <person name="Zhong F."/>
            <person name="Delcher A.L."/>
            <person name="Huson D.H."/>
            <person name="Kravitz S.A."/>
            <person name="Mouchard L."/>
            <person name="Reinert K."/>
            <person name="Remington K.A."/>
            <person name="Clark A.G."/>
            <person name="Waterman M.S."/>
            <person name="Eichler E.E."/>
            <person name="Adams M.D."/>
            <person name="Hunkapiller M.W."/>
            <person name="Myers E.W."/>
            <person name="Venter J.C."/>
        </authorList>
    </citation>
    <scope>NUCLEOTIDE SEQUENCE [LARGE SCALE GENOMIC DNA]</scope>
</reference>
<reference key="5">
    <citation type="journal article" date="2004" name="Genome Res.">
        <title>The status, quality, and expansion of the NIH full-length cDNA project: the Mammalian Gene Collection (MGC).</title>
        <authorList>
            <consortium name="The MGC Project Team"/>
        </authorList>
    </citation>
    <scope>NUCLEOTIDE SEQUENCE [LARGE SCALE MRNA] (ISOFORMS 1 AND 2)</scope>
    <scope>VARIANT LYS-7</scope>
    <source>
        <tissue>Brain</tissue>
        <tissue>Lung</tissue>
    </source>
</reference>
<reference key="6">
    <citation type="journal article" date="1998" name="J. Biol. Chem.">
        <title>Differential and cooperative polysialylation of the neural cell adhesion molecule by two polysialyltransferases, PST and STX.</title>
        <authorList>
            <person name="Angata K."/>
            <person name="Suzuki M."/>
            <person name="Fukuda M."/>
        </authorList>
    </citation>
    <scope>FUNCTION</scope>
    <scope>CATALYTIC ACTIVITY</scope>
</reference>
<reference key="7">
    <citation type="journal article" date="1998" name="J. Biol. Chem.">
        <title>In vivo autopolysialylation and localization of the polysialyltransferases PST and STX.</title>
        <authorList>
            <person name="Close B.E."/>
            <person name="Colley K.J."/>
        </authorList>
    </citation>
    <scope>SUBCELLULAR LOCATION</scope>
    <scope>AUTOPOLYSIALYLATION</scope>
</reference>
<reference key="8">
    <citation type="journal article" date="2000" name="J. Biol. Chem.">
        <title>Differential biosynthesis of polysialic acid on neural cell adhesion molecule (NCAM) and oligosaccharide acceptors by three distinct alpha2,8-Sialyltransferases, ST8Sia IV (PST), ST8Sia II (STX), and ST8Sia III.</title>
        <authorList>
            <person name="Angata K."/>
            <person name="Suzuki M."/>
            <person name="McAuliffe J."/>
            <person name="Ding Y."/>
            <person name="Hindsgaul O."/>
            <person name="Fukuda M."/>
        </authorList>
    </citation>
    <scope>FUNCTION</scope>
    <scope>CATALYTIC ACTIVITY</scope>
    <scope>AUTOPOLYSIALYLATION</scope>
    <source>
        <tissue>Fetal brain</tissue>
    </source>
</reference>
<reference key="9">
    <citation type="journal article" date="2001" name="J. Biol. Chem.">
        <title>Unique disulfide bond structures found in ST8Sia IV polysialyltransferase are required for its activity.</title>
        <authorList>
            <person name="Angata K."/>
            <person name="Yen T.Y."/>
            <person name="El-Battari A."/>
            <person name="Macher B.A."/>
            <person name="Fukuda M."/>
        </authorList>
    </citation>
    <scope>FUNCTION</scope>
    <scope>CATALYTIC ACTIVITY</scope>
    <scope>DISULFIDE BONDS</scope>
    <scope>GLYCOSYLATION AT ASN-74</scope>
    <scope>IDENTIFICATION BY MASS SPECTROMETRY</scope>
    <scope>MUTAGENESIS OF CYS-142; CYS-156; CYS-169; CYS-292 AND CYS-356</scope>
</reference>
<reference key="10">
    <citation type="journal article" date="2017" name="Glycobiology">
        <title>Different properties of polysialic acids synthesized by the polysialyltransferases ST8SIA2 and ST8SIA4.</title>
        <authorList>
            <person name="Mori A."/>
            <person name="Hane M."/>
            <person name="Niimi Y."/>
            <person name="Kitajima K."/>
            <person name="Sato C."/>
        </authorList>
    </citation>
    <scope>FUNCTION</scope>
    <scope>CATALYTIC ACTIVITY</scope>
</reference>
<reference evidence="15 16" key="11">
    <citation type="submission" date="2017-07" db="PDB data bank">
        <title>NMR-Based Model of the 22 Amino Acid Peptide in Polysialyltransferase Domain (PSTD) of the Polysialyltransferase ST8Sia IV.</title>
        <authorList>
            <person name="Lu B."/>
            <person name="Liao S.M."/>
            <person name="Chen D."/>
            <person name="Liu X.H."/>
            <person name="Zhou G.P."/>
            <person name="Huang R.B."/>
        </authorList>
    </citation>
    <scope>STRUCTURE BY NMR OF 258-279</scope>
</reference>
<reference evidence="17" key="12">
    <citation type="journal article" date="2019" name="Med. Chem.">
        <title>The Inhibition of Polysialyltranseferase ST8SiaIV Through Heparin Binding to Polysialyltransferase Domain (PSTD).</title>
        <authorList>
            <person name="Peng L.X."/>
            <person name="Liu X.H."/>
            <person name="Lu B."/>
            <person name="Liao S.M."/>
            <person name="Zhou F."/>
            <person name="Huang J.M."/>
            <person name="Chen D."/>
            <person name="Troy F.A. II"/>
            <person name="Zhou G.P."/>
            <person name="Huang R.B."/>
        </authorList>
    </citation>
    <scope>STRUCTURE BY NMR OF 245-279</scope>
</reference>
<reference key="13">
    <citation type="journal article" date="2006" name="Science">
        <title>The consensus coding sequences of human breast and colorectal cancers.</title>
        <authorList>
            <person name="Sjoeblom T."/>
            <person name="Jones S."/>
            <person name="Wood L.D."/>
            <person name="Parsons D.W."/>
            <person name="Lin J."/>
            <person name="Barber T.D."/>
            <person name="Mandelker D."/>
            <person name="Leary R.J."/>
            <person name="Ptak J."/>
            <person name="Silliman N."/>
            <person name="Szabo S."/>
            <person name="Buckhaults P."/>
            <person name="Farrell C."/>
            <person name="Meeh P."/>
            <person name="Markowitz S.D."/>
            <person name="Willis J."/>
            <person name="Dawson D."/>
            <person name="Willson J.K.V."/>
            <person name="Gazdar A.F."/>
            <person name="Hartigan J."/>
            <person name="Wu L."/>
            <person name="Liu C."/>
            <person name="Parmigiani G."/>
            <person name="Park B.H."/>
            <person name="Bachman K.E."/>
            <person name="Papadopoulos N."/>
            <person name="Vogelstein B."/>
            <person name="Kinzler K.W."/>
            <person name="Velculescu V.E."/>
        </authorList>
    </citation>
    <scope>VARIANT [LARGE SCALE ANALYSIS] GLY-92</scope>
</reference>
<dbReference type="EC" id="2.4.3.-" evidence="3 4 7 9"/>
<dbReference type="EMBL" id="L41680">
    <property type="protein sequence ID" value="AAC41775.1"/>
    <property type="molecule type" value="mRNA"/>
</dbReference>
<dbReference type="EMBL" id="AK292872">
    <property type="protein sequence ID" value="BAF85561.1"/>
    <property type="molecule type" value="mRNA"/>
</dbReference>
<dbReference type="EMBL" id="AC010411">
    <property type="status" value="NOT_ANNOTATED_CDS"/>
    <property type="molecule type" value="Genomic_DNA"/>
</dbReference>
<dbReference type="EMBL" id="AC117530">
    <property type="status" value="NOT_ANNOTATED_CDS"/>
    <property type="molecule type" value="Genomic_DNA"/>
</dbReference>
<dbReference type="EMBL" id="CH471086">
    <property type="protein sequence ID" value="EAW49104.1"/>
    <property type="molecule type" value="Genomic_DNA"/>
</dbReference>
<dbReference type="EMBL" id="CH471086">
    <property type="protein sequence ID" value="EAW49105.1"/>
    <property type="molecule type" value="Genomic_DNA"/>
</dbReference>
<dbReference type="EMBL" id="BC027866">
    <property type="protein sequence ID" value="AAH27866.1"/>
    <property type="molecule type" value="mRNA"/>
</dbReference>
<dbReference type="EMBL" id="BC053657">
    <property type="protein sequence ID" value="AAH53657.1"/>
    <property type="molecule type" value="mRNA"/>
</dbReference>
<dbReference type="CCDS" id="CCDS4091.1">
    <molecule id="Q92187-1"/>
</dbReference>
<dbReference type="CCDS" id="CCDS47252.1">
    <molecule id="Q92187-2"/>
</dbReference>
<dbReference type="PIR" id="I59403">
    <property type="entry name" value="I59403"/>
</dbReference>
<dbReference type="RefSeq" id="NP_005659.1">
    <molecule id="Q92187-1"/>
    <property type="nucleotide sequence ID" value="NM_005668.6"/>
</dbReference>
<dbReference type="RefSeq" id="NP_778222.1">
    <molecule id="Q92187-2"/>
    <property type="nucleotide sequence ID" value="NM_175052.3"/>
</dbReference>
<dbReference type="PDB" id="5Y22">
    <property type="method" value="NMR"/>
    <property type="chains" value="A=258-279"/>
</dbReference>
<dbReference type="PDB" id="5Y3U">
    <property type="method" value="NMR"/>
    <property type="chains" value="A=258-279"/>
</dbReference>
<dbReference type="PDB" id="6AHZ">
    <property type="method" value="NMR"/>
    <property type="chains" value="A=245-279"/>
</dbReference>
<dbReference type="PDBsum" id="5Y22"/>
<dbReference type="PDBsum" id="5Y3U"/>
<dbReference type="PDBsum" id="6AHZ"/>
<dbReference type="SMR" id="Q92187"/>
<dbReference type="BioGRID" id="113636">
    <property type="interactions" value="84"/>
</dbReference>
<dbReference type="FunCoup" id="Q92187">
    <property type="interactions" value="454"/>
</dbReference>
<dbReference type="IntAct" id="Q92187">
    <property type="interactions" value="82"/>
</dbReference>
<dbReference type="STRING" id="9606.ENSP00000231461"/>
<dbReference type="CAZy" id="GT29">
    <property type="family name" value="Glycosyltransferase Family 29"/>
</dbReference>
<dbReference type="GlyCosmos" id="Q92187">
    <property type="glycosylation" value="5 sites, No reported glycans"/>
</dbReference>
<dbReference type="GlyGen" id="Q92187">
    <property type="glycosylation" value="6 sites, 4 N-linked glycans (4 sites), 1 O-linked glycan (1 site)"/>
</dbReference>
<dbReference type="iPTMnet" id="Q92187"/>
<dbReference type="PhosphoSitePlus" id="Q92187"/>
<dbReference type="BioMuta" id="ST8SIA4"/>
<dbReference type="DMDM" id="2494834"/>
<dbReference type="jPOST" id="Q92187"/>
<dbReference type="MassIVE" id="Q92187"/>
<dbReference type="PaxDb" id="9606-ENSP00000231461"/>
<dbReference type="PeptideAtlas" id="Q92187"/>
<dbReference type="ProteomicsDB" id="32217"/>
<dbReference type="ProteomicsDB" id="75254">
    <molecule id="Q92187-1"/>
</dbReference>
<dbReference type="Pumba" id="Q92187"/>
<dbReference type="ABCD" id="Q92187">
    <property type="antibodies" value="1 sequenced antibody"/>
</dbReference>
<dbReference type="Antibodypedia" id="25167">
    <property type="antibodies" value="175 antibodies from 24 providers"/>
</dbReference>
<dbReference type="DNASU" id="7903"/>
<dbReference type="Ensembl" id="ENST00000231461.10">
    <molecule id="Q92187-1"/>
    <property type="protein sequence ID" value="ENSP00000231461.4"/>
    <property type="gene ID" value="ENSG00000113532.13"/>
</dbReference>
<dbReference type="Ensembl" id="ENST00000451528.2">
    <molecule id="Q92187-2"/>
    <property type="protein sequence ID" value="ENSP00000428914.1"/>
    <property type="gene ID" value="ENSG00000113532.13"/>
</dbReference>
<dbReference type="GeneID" id="7903"/>
<dbReference type="KEGG" id="hsa:7903"/>
<dbReference type="MANE-Select" id="ENST00000231461.10">
    <property type="protein sequence ID" value="ENSP00000231461.4"/>
    <property type="RefSeq nucleotide sequence ID" value="NM_005668.6"/>
    <property type="RefSeq protein sequence ID" value="NP_005659.1"/>
</dbReference>
<dbReference type="UCSC" id="uc003knk.5">
    <molecule id="Q92187-1"/>
    <property type="organism name" value="human"/>
</dbReference>
<dbReference type="AGR" id="HGNC:10871"/>
<dbReference type="CTD" id="7903"/>
<dbReference type="DisGeNET" id="7903"/>
<dbReference type="GeneCards" id="ST8SIA4"/>
<dbReference type="HGNC" id="HGNC:10871">
    <property type="gene designation" value="ST8SIA4"/>
</dbReference>
<dbReference type="HPA" id="ENSG00000113532">
    <property type="expression patterns" value="Tissue enhanced (lymphoid)"/>
</dbReference>
<dbReference type="MIM" id="602547">
    <property type="type" value="gene"/>
</dbReference>
<dbReference type="neXtProt" id="NX_Q92187"/>
<dbReference type="OpenTargets" id="ENSG00000113532"/>
<dbReference type="PharmGKB" id="PA35772"/>
<dbReference type="VEuPathDB" id="HostDB:ENSG00000113532"/>
<dbReference type="eggNOG" id="KOG2692">
    <property type="taxonomic scope" value="Eukaryota"/>
</dbReference>
<dbReference type="GeneTree" id="ENSGT01030000234535"/>
<dbReference type="HOGENOM" id="CLU_048583_3_0_1"/>
<dbReference type="InParanoid" id="Q92187"/>
<dbReference type="OMA" id="HAAEGWK"/>
<dbReference type="OrthoDB" id="10264956at2759"/>
<dbReference type="PAN-GO" id="Q92187">
    <property type="GO annotations" value="4 GO annotations based on evolutionary models"/>
</dbReference>
<dbReference type="PhylomeDB" id="Q92187"/>
<dbReference type="TreeFam" id="TF352820"/>
<dbReference type="BRENDA" id="2.4.99.8">
    <property type="organism ID" value="2681"/>
</dbReference>
<dbReference type="PathwayCommons" id="Q92187"/>
<dbReference type="Reactome" id="R-HSA-4085001">
    <property type="pathway name" value="Sialic acid metabolism"/>
</dbReference>
<dbReference type="Reactome" id="R-HSA-419037">
    <property type="pathway name" value="NCAM1 interactions"/>
</dbReference>
<dbReference type="SignaLink" id="Q92187"/>
<dbReference type="UniPathway" id="UPA00378"/>
<dbReference type="BioGRID-ORCS" id="7903">
    <property type="hits" value="9 hits in 1143 CRISPR screens"/>
</dbReference>
<dbReference type="ChiTaRS" id="ST8SIA4">
    <property type="organism name" value="human"/>
</dbReference>
<dbReference type="GeneWiki" id="ST8SIA4"/>
<dbReference type="GenomeRNAi" id="7903"/>
<dbReference type="Pharos" id="Q92187">
    <property type="development level" value="Tbio"/>
</dbReference>
<dbReference type="PRO" id="PR:Q92187"/>
<dbReference type="Proteomes" id="UP000005640">
    <property type="component" value="Chromosome 5"/>
</dbReference>
<dbReference type="RNAct" id="Q92187">
    <property type="molecule type" value="protein"/>
</dbReference>
<dbReference type="Bgee" id="ENSG00000113532">
    <property type="expression patterns" value="Expressed in bronchial epithelial cell and 165 other cell types or tissues"/>
</dbReference>
<dbReference type="ExpressionAtlas" id="Q92187">
    <property type="expression patterns" value="baseline and differential"/>
</dbReference>
<dbReference type="GO" id="GO:0005576">
    <property type="term" value="C:extracellular region"/>
    <property type="evidence" value="ECO:0007669"/>
    <property type="project" value="UniProtKB-SubCell"/>
</dbReference>
<dbReference type="GO" id="GO:0005794">
    <property type="term" value="C:Golgi apparatus"/>
    <property type="evidence" value="ECO:0000314"/>
    <property type="project" value="UniProtKB"/>
</dbReference>
<dbReference type="GO" id="GO:0000139">
    <property type="term" value="C:Golgi membrane"/>
    <property type="evidence" value="ECO:0000304"/>
    <property type="project" value="Reactome"/>
</dbReference>
<dbReference type="GO" id="GO:0003828">
    <property type="term" value="F:alpha-N-acetylneuraminate alpha-2,8-sialyltransferase activity"/>
    <property type="evidence" value="ECO:0000314"/>
    <property type="project" value="UniProtKB"/>
</dbReference>
<dbReference type="GO" id="GO:0033691">
    <property type="term" value="F:sialic acid binding"/>
    <property type="evidence" value="ECO:0000305"/>
    <property type="project" value="BHF-UCL"/>
</dbReference>
<dbReference type="GO" id="GO:0008373">
    <property type="term" value="F:sialyltransferase activity"/>
    <property type="evidence" value="ECO:0000314"/>
    <property type="project" value="UniProtKB"/>
</dbReference>
<dbReference type="GO" id="GO:0001574">
    <property type="term" value="P:ganglioside biosynthetic process"/>
    <property type="evidence" value="ECO:0000314"/>
    <property type="project" value="BHF-UCL"/>
</dbReference>
<dbReference type="GO" id="GO:0006491">
    <property type="term" value="P:N-glycan processing"/>
    <property type="evidence" value="ECO:0000314"/>
    <property type="project" value="BHF-UCL"/>
</dbReference>
<dbReference type="GO" id="GO:0007399">
    <property type="term" value="P:nervous system development"/>
    <property type="evidence" value="ECO:0000304"/>
    <property type="project" value="ProtInc"/>
</dbReference>
<dbReference type="GO" id="GO:0009311">
    <property type="term" value="P:oligosaccharide metabolic process"/>
    <property type="evidence" value="ECO:0000314"/>
    <property type="project" value="BHF-UCL"/>
</dbReference>
<dbReference type="GO" id="GO:0006486">
    <property type="term" value="P:protein glycosylation"/>
    <property type="evidence" value="ECO:0000314"/>
    <property type="project" value="BHF-UCL"/>
</dbReference>
<dbReference type="GO" id="GO:0036211">
    <property type="term" value="P:protein modification process"/>
    <property type="evidence" value="ECO:0000304"/>
    <property type="project" value="ProtInc"/>
</dbReference>
<dbReference type="GO" id="GO:0097503">
    <property type="term" value="P:sialylation"/>
    <property type="evidence" value="ECO:0000314"/>
    <property type="project" value="UniProtKB"/>
</dbReference>
<dbReference type="CDD" id="cd23988">
    <property type="entry name" value="GT29_ST8SIA4"/>
    <property type="match status" value="1"/>
</dbReference>
<dbReference type="FunFam" id="3.90.1480.20:FF:000001">
    <property type="entry name" value="ST8 alpha-N-acetyl-neuraminide alpha-2,8-sialyltransferase 2"/>
    <property type="match status" value="1"/>
</dbReference>
<dbReference type="Gene3D" id="3.90.1480.20">
    <property type="entry name" value="Glycosyl transferase family 29"/>
    <property type="match status" value="1"/>
</dbReference>
<dbReference type="InterPro" id="IPR001675">
    <property type="entry name" value="Glyco_trans_29"/>
</dbReference>
<dbReference type="InterPro" id="IPR050943">
    <property type="entry name" value="Glycosyltr_29_Sialyltrsf"/>
</dbReference>
<dbReference type="InterPro" id="IPR038578">
    <property type="entry name" value="GT29-like_sf"/>
</dbReference>
<dbReference type="InterPro" id="IPR012163">
    <property type="entry name" value="Sialyl_trans"/>
</dbReference>
<dbReference type="PANTHER" id="PTHR11987">
    <property type="entry name" value="ALPHA-2,8-SIALYLTRANSFERASE"/>
    <property type="match status" value="1"/>
</dbReference>
<dbReference type="PANTHER" id="PTHR11987:SF48">
    <property type="entry name" value="CMP-N-ACETYLNEURAMINATE-POLY-ALPHA-2,8-SIALYLTRANSFERASE"/>
    <property type="match status" value="1"/>
</dbReference>
<dbReference type="Pfam" id="PF00777">
    <property type="entry name" value="Glyco_transf_29"/>
    <property type="match status" value="1"/>
</dbReference>
<dbReference type="PIRSF" id="PIRSF005557">
    <property type="entry name" value="Sialyl_trans"/>
    <property type="match status" value="1"/>
</dbReference>
<comment type="function">
    <text evidence="3 4 7 9">Catalyzes the transfer of a sialic acid from a CMP-linked sialic acid donor onto a terminal alpha-2,3-, alpha-2,6-, or alpha-2,8-linked sialic acid of an N-linked glycan protein acceptor through alpha-2,8-linkages (PubMed:10766765, PubMed:11279095, PubMed:28810663, PubMed:9774483). Therefore, participates in polysialic acid synthesis on various sialylated N-acetyllactosaminyl oligosaccharides, including NCAM1 N-glycans, FETUB N-glycans and AHSG (PubMed:10766765, PubMed:11279095, PubMed:28810663, PubMed:9774483). It is noteworthy that alpha-2,3-linked sialic acid is apparently a better acceptor than alpha-2,6-linked sialic acid (PubMed:9774483).</text>
</comment>
<comment type="catalytic activity">
    <reaction evidence="3 4 7 9">
        <text>[N-acetyl-alpha-D-neuraminosyl-(2-&gt;8)](n) + CMP-N-acetyl-beta-neuraminate = [N-acetyl-alpha-D-neuraminosyl-(2-&gt;8)](n+1) + CMP + H(+)</text>
        <dbReference type="Rhea" id="RHEA:77367"/>
        <dbReference type="Rhea" id="RHEA-COMP:14315"/>
        <dbReference type="Rhea" id="RHEA-COMP:18878"/>
        <dbReference type="ChEBI" id="CHEBI:15378"/>
        <dbReference type="ChEBI" id="CHEBI:57812"/>
        <dbReference type="ChEBI" id="CHEBI:60377"/>
        <dbReference type="ChEBI" id="CHEBI:139252"/>
    </reaction>
    <physiologicalReaction direction="left-to-right" evidence="3 4 7 9">
        <dbReference type="Rhea" id="RHEA:77368"/>
    </physiologicalReaction>
</comment>
<comment type="pathway">
    <text evidence="3 4 7 9">Protein modification; protein glycosylation.</text>
</comment>
<comment type="subcellular location">
    <subcellularLocation>
        <location evidence="10">Golgi apparatus membrane</location>
        <topology evidence="13">Single-pass type II membrane protein</topology>
    </subcellularLocation>
    <subcellularLocation>
        <location evidence="10">Secreted</location>
    </subcellularLocation>
</comment>
<comment type="alternative products">
    <event type="alternative splicing"/>
    <isoform>
        <id>Q92187-1</id>
        <name>1</name>
        <sequence type="displayed"/>
    </isoform>
    <isoform>
        <id>Q92187-2</id>
        <name>2</name>
        <sequence type="described" ref="VSP_044867"/>
    </isoform>
</comment>
<comment type="tissue specificity">
    <text evidence="8">Highly expressed in fetal brain, lung and kidney and in adult heart, spleen and thymus (PubMed:7624364). Present to a lesser extent in adult brain, placenta, lung, large and small intestine and peripheral blood leukocytes (PubMed:7624364).</text>
</comment>
<comment type="PTM">
    <text evidence="3 10">Autopolysialylated.</text>
</comment>
<comment type="similarity">
    <text evidence="13">Belongs to the glycosyltransferase 29 family.</text>
</comment>
<comment type="online information" name="Functional Glycomics Gateway - GTase">
    <link uri="http://www.functionalglycomics.org/glycomics/molecule/jsp/glycoEnzyme/viewGlycoEnzyme.jsp?gbpId=gt_hum_639"/>
    <text>ST8Sia IV</text>
</comment>